<organism>
    <name type="scientific">Ectopseudomonas oleovorans</name>
    <name type="common">Pseudomonas oleovorans</name>
    <dbReference type="NCBI Taxonomy" id="301"/>
    <lineage>
        <taxon>Bacteria</taxon>
        <taxon>Pseudomonadati</taxon>
        <taxon>Pseudomonadota</taxon>
        <taxon>Gammaproteobacteria</taxon>
        <taxon>Pseudomonadales</taxon>
        <taxon>Pseudomonadaceae</taxon>
        <taxon>Ectopseudomonas</taxon>
    </lineage>
</organism>
<reference key="1">
    <citation type="journal article" date="2000" name="Appl. Environ. Microbiol.">
        <title>Sequence analysis and initial characterization of two isozymes of hydroxylaminobenzene mutase from Pseudomonas pseudoalcaligenes JS45.</title>
        <authorList>
            <person name="Davis J.K."/>
            <person name="Paoli G.C."/>
            <person name="He Z."/>
            <person name="Nadeau L.J."/>
            <person name="Somerville C.C."/>
            <person name="Spain J.C."/>
        </authorList>
    </citation>
    <scope>NUCLEOTIDE SEQUENCE [GENOMIC DNA]</scope>
    <scope>FUNCTION</scope>
    <scope>CATALYTIC ACTIVITY</scope>
    <scope>SUBCELLULAR LOCATION</scope>
    <scope>DISRUPTION PHENOTYPE</scope>
    <source>
        <strain>JS45</strain>
    </source>
</reference>
<evidence type="ECO:0000255" key="1"/>
<evidence type="ECO:0000269" key="2">
    <source>
    </source>
</evidence>
<evidence type="ECO:0000305" key="3"/>
<accession>O52214</accession>
<protein>
    <recommendedName>
        <fullName>Hydroxylaminobenzene mutase HabA</fullName>
        <shortName>HAB mutase</shortName>
        <ecNumber>5.4.4.1</ecNumber>
    </recommendedName>
    <alternativeName>
        <fullName>(Hydroxyamino)benzene mutase</fullName>
    </alternativeName>
</protein>
<proteinExistence type="evidence at protein level"/>
<keyword id="KW-1003">Cell membrane</keyword>
<keyword id="KW-0413">Isomerase</keyword>
<keyword id="KW-0472">Membrane</keyword>
<keyword id="KW-0812">Transmembrane</keyword>
<keyword id="KW-1133">Transmembrane helix</keyword>
<gene>
    <name type="primary">habA</name>
</gene>
<comment type="function">
    <text evidence="2">Catalyzes the rearrangement of hydroxylaminobenzene to 2-aminophenol. Involved in the degradation of nitrobenzene.</text>
</comment>
<comment type="catalytic activity">
    <reaction evidence="2">
        <text>N-phenylhydroxylamine = 2-aminophenol</text>
        <dbReference type="Rhea" id="RHEA:19245"/>
        <dbReference type="ChEBI" id="CHEBI:18112"/>
        <dbReference type="ChEBI" id="CHEBI:28902"/>
        <dbReference type="EC" id="5.4.4.1"/>
    </reaction>
</comment>
<comment type="subcellular location">
    <subcellularLocation>
        <location evidence="3">Cell membrane</location>
        <topology evidence="3">Multi-pass membrane protein</topology>
    </subcellularLocation>
    <text evidence="2">Could be membrane-associated.</text>
</comment>
<comment type="disruption phenotype">
    <text evidence="2">Mutants are not able to grow on nitrobenzene.</text>
</comment>
<feature type="chain" id="PRO_0000418542" description="Hydroxylaminobenzene mutase HabA">
    <location>
        <begin position="1"/>
        <end position="135"/>
    </location>
</feature>
<feature type="transmembrane region" description="Helical" evidence="1">
    <location>
        <begin position="5"/>
        <end position="25"/>
    </location>
</feature>
<feature type="transmembrane region" description="Helical" evidence="1">
    <location>
        <begin position="33"/>
        <end position="55"/>
    </location>
</feature>
<feature type="transmembrane region" description="Helical" evidence="1">
    <location>
        <begin position="67"/>
        <end position="87"/>
    </location>
</feature>
<feature type="transmembrane region" description="Helical" evidence="1">
    <location>
        <begin position="113"/>
        <end position="133"/>
    </location>
</feature>
<name>HABA_ECTOL</name>
<sequence length="135" mass="14610">MQTYLFASGLVLFLLGLVTGLLVPVSKNPRMGVAGHLQGMTNGPLLIIAGLLWPYLELPDAWQLATFWLLIYGTYANWLGVQLAALWGAGAKLAPIAAGEHRSTPLKERVVTFLLFSLIPAMFAAPIILLIGILR</sequence>
<dbReference type="EC" id="5.4.4.1"/>
<dbReference type="EMBL" id="AF028594">
    <property type="protein sequence ID" value="AAB94122.1"/>
    <property type="molecule type" value="Genomic_DNA"/>
</dbReference>
<dbReference type="SMR" id="O52214"/>
<dbReference type="KEGG" id="ag:AAB94122"/>
<dbReference type="BioCyc" id="MetaCyc:MONOMER-13322"/>
<dbReference type="GO" id="GO:0005886">
    <property type="term" value="C:plasma membrane"/>
    <property type="evidence" value="ECO:0007669"/>
    <property type="project" value="UniProtKB-SubCell"/>
</dbReference>
<dbReference type="GO" id="GO:0018824">
    <property type="term" value="F:(hydroxyamino)benzene mutase activity"/>
    <property type="evidence" value="ECO:0007669"/>
    <property type="project" value="RHEA"/>
</dbReference>